<comment type="function">
    <text evidence="1">Part of the twin-arginine translocation (Tat) system that transports large folded proteins containing a characteristic twin-arginine motif in their signal peptide across membranes. TatA could form the protein-conducting channel of the Tat system.</text>
</comment>
<comment type="subunit">
    <text evidence="1">The Tat system comprises two distinct complexes: a TatABC complex, containing multiple copies of TatA, TatB and TatC subunits, and a separate TatA complex, containing only TatA subunits. Substrates initially bind to the TatABC complex, which probably triggers association of the separate TatA complex to form the active translocon.</text>
</comment>
<comment type="subcellular location">
    <subcellularLocation>
        <location evidence="1">Cell inner membrane</location>
        <topology evidence="1">Single-pass membrane protein</topology>
    </subcellularLocation>
</comment>
<comment type="similarity">
    <text evidence="1">Belongs to the TatA/E family.</text>
</comment>
<feature type="chain" id="PRO_1000044396" description="Sec-independent protein translocase protein TatA">
    <location>
        <begin position="1"/>
        <end position="71"/>
    </location>
</feature>
<feature type="transmembrane region" description="Helical" evidence="1">
    <location>
        <begin position="1"/>
        <end position="21"/>
    </location>
</feature>
<feature type="region of interest" description="Disordered" evidence="2">
    <location>
        <begin position="47"/>
        <end position="71"/>
    </location>
</feature>
<feature type="compositionally biased region" description="Basic and acidic residues" evidence="2">
    <location>
        <begin position="49"/>
        <end position="71"/>
    </location>
</feature>
<organism>
    <name type="scientific">Chelativorans sp. (strain BNC1)</name>
    <dbReference type="NCBI Taxonomy" id="266779"/>
    <lineage>
        <taxon>Bacteria</taxon>
        <taxon>Pseudomonadati</taxon>
        <taxon>Pseudomonadota</taxon>
        <taxon>Alphaproteobacteria</taxon>
        <taxon>Hyphomicrobiales</taxon>
        <taxon>Phyllobacteriaceae</taxon>
        <taxon>Chelativorans</taxon>
    </lineage>
</organism>
<sequence>MGSFSIWHWLIVLVVVLLLFGRGKIPELMGDMAKGIKNFRKGMTDEAEEAKTVEHRTDEPVGEVKQKASKS</sequence>
<dbReference type="EMBL" id="CP000390">
    <property type="protein sequence ID" value="ABG63200.1"/>
    <property type="molecule type" value="Genomic_DNA"/>
</dbReference>
<dbReference type="SMR" id="Q11HC5"/>
<dbReference type="STRING" id="266779.Meso_1806"/>
<dbReference type="KEGG" id="mes:Meso_1806"/>
<dbReference type="eggNOG" id="COG1826">
    <property type="taxonomic scope" value="Bacteria"/>
</dbReference>
<dbReference type="HOGENOM" id="CLU_086034_5_0_5"/>
<dbReference type="OrthoDB" id="7161179at2"/>
<dbReference type="GO" id="GO:0033281">
    <property type="term" value="C:TAT protein transport complex"/>
    <property type="evidence" value="ECO:0007669"/>
    <property type="project" value="UniProtKB-UniRule"/>
</dbReference>
<dbReference type="GO" id="GO:0008320">
    <property type="term" value="F:protein transmembrane transporter activity"/>
    <property type="evidence" value="ECO:0007669"/>
    <property type="project" value="UniProtKB-UniRule"/>
</dbReference>
<dbReference type="GO" id="GO:0043953">
    <property type="term" value="P:protein transport by the Tat complex"/>
    <property type="evidence" value="ECO:0007669"/>
    <property type="project" value="UniProtKB-UniRule"/>
</dbReference>
<dbReference type="Gene3D" id="1.20.5.3310">
    <property type="match status" value="1"/>
</dbReference>
<dbReference type="HAMAP" id="MF_00236">
    <property type="entry name" value="TatA_E"/>
    <property type="match status" value="1"/>
</dbReference>
<dbReference type="InterPro" id="IPR003369">
    <property type="entry name" value="TatA/B/E"/>
</dbReference>
<dbReference type="InterPro" id="IPR006312">
    <property type="entry name" value="TatA/E"/>
</dbReference>
<dbReference type="NCBIfam" id="NF001940">
    <property type="entry name" value="PRK00720.1"/>
    <property type="match status" value="1"/>
</dbReference>
<dbReference type="NCBIfam" id="TIGR01411">
    <property type="entry name" value="tatAE"/>
    <property type="match status" value="1"/>
</dbReference>
<dbReference type="PANTHER" id="PTHR42982">
    <property type="entry name" value="SEC-INDEPENDENT PROTEIN TRANSLOCASE PROTEIN TATA"/>
    <property type="match status" value="1"/>
</dbReference>
<dbReference type="PANTHER" id="PTHR42982:SF1">
    <property type="entry name" value="SEC-INDEPENDENT PROTEIN TRANSLOCASE PROTEIN TATA"/>
    <property type="match status" value="1"/>
</dbReference>
<dbReference type="Pfam" id="PF02416">
    <property type="entry name" value="TatA_B_E"/>
    <property type="match status" value="1"/>
</dbReference>
<gene>
    <name evidence="1" type="primary">tatA</name>
    <name type="ordered locus">Meso_1806</name>
</gene>
<protein>
    <recommendedName>
        <fullName evidence="1">Sec-independent protein translocase protein TatA</fullName>
    </recommendedName>
</protein>
<accession>Q11HC5</accession>
<proteinExistence type="inferred from homology"/>
<name>TATA_CHESB</name>
<reference key="1">
    <citation type="submission" date="2006-06" db="EMBL/GenBank/DDBJ databases">
        <title>Complete sequence of chromosome of Mesorhizobium sp. BNC1.</title>
        <authorList>
            <consortium name="US DOE Joint Genome Institute"/>
            <person name="Copeland A."/>
            <person name="Lucas S."/>
            <person name="Lapidus A."/>
            <person name="Barry K."/>
            <person name="Detter J.C."/>
            <person name="Glavina del Rio T."/>
            <person name="Hammon N."/>
            <person name="Israni S."/>
            <person name="Dalin E."/>
            <person name="Tice H."/>
            <person name="Pitluck S."/>
            <person name="Chertkov O."/>
            <person name="Brettin T."/>
            <person name="Bruce D."/>
            <person name="Han C."/>
            <person name="Tapia R."/>
            <person name="Gilna P."/>
            <person name="Schmutz J."/>
            <person name="Larimer F."/>
            <person name="Land M."/>
            <person name="Hauser L."/>
            <person name="Kyrpides N."/>
            <person name="Mikhailova N."/>
            <person name="Richardson P."/>
        </authorList>
    </citation>
    <scope>NUCLEOTIDE SEQUENCE [LARGE SCALE GENOMIC DNA]</scope>
    <source>
        <strain>BNC1</strain>
    </source>
</reference>
<keyword id="KW-0997">Cell inner membrane</keyword>
<keyword id="KW-1003">Cell membrane</keyword>
<keyword id="KW-0472">Membrane</keyword>
<keyword id="KW-0653">Protein transport</keyword>
<keyword id="KW-0811">Translocation</keyword>
<keyword id="KW-0812">Transmembrane</keyword>
<keyword id="KW-1133">Transmembrane helix</keyword>
<keyword id="KW-0813">Transport</keyword>
<evidence type="ECO:0000255" key="1">
    <source>
        <dbReference type="HAMAP-Rule" id="MF_00236"/>
    </source>
</evidence>
<evidence type="ECO:0000256" key="2">
    <source>
        <dbReference type="SAM" id="MobiDB-lite"/>
    </source>
</evidence>